<organism>
    <name type="scientific">Synechococcus elongatus (strain ATCC 33912 / PCC 7942 / FACHB-805)</name>
    <name type="common">Anacystis nidulans R2</name>
    <dbReference type="NCBI Taxonomy" id="1140"/>
    <lineage>
        <taxon>Bacteria</taxon>
        <taxon>Bacillati</taxon>
        <taxon>Cyanobacteriota</taxon>
        <taxon>Cyanophyceae</taxon>
        <taxon>Synechococcales</taxon>
        <taxon>Synechococcaceae</taxon>
        <taxon>Synechococcus</taxon>
    </lineage>
</organism>
<gene>
    <name evidence="1" type="primary">pstB</name>
    <name type="ordered locus">Synpcc7942_2441</name>
</gene>
<keyword id="KW-0067">ATP-binding</keyword>
<keyword id="KW-0997">Cell inner membrane</keyword>
<keyword id="KW-1003">Cell membrane</keyword>
<keyword id="KW-0472">Membrane</keyword>
<keyword id="KW-0547">Nucleotide-binding</keyword>
<keyword id="KW-0592">Phosphate transport</keyword>
<keyword id="KW-1185">Reference proteome</keyword>
<keyword id="KW-1278">Translocase</keyword>
<keyword id="KW-0813">Transport</keyword>
<comment type="function">
    <text evidence="1">Part of the ABC transporter complex PstSACB involved in phosphate import. Responsible for energy coupling to the transport system.</text>
</comment>
<comment type="catalytic activity">
    <reaction evidence="1">
        <text>phosphate(out) + ATP + H2O = ADP + 2 phosphate(in) + H(+)</text>
        <dbReference type="Rhea" id="RHEA:24440"/>
        <dbReference type="ChEBI" id="CHEBI:15377"/>
        <dbReference type="ChEBI" id="CHEBI:15378"/>
        <dbReference type="ChEBI" id="CHEBI:30616"/>
        <dbReference type="ChEBI" id="CHEBI:43474"/>
        <dbReference type="ChEBI" id="CHEBI:456216"/>
        <dbReference type="EC" id="7.3.2.1"/>
    </reaction>
</comment>
<comment type="subunit">
    <text evidence="1">The complex is composed of two ATP-binding proteins (PstB), two transmembrane proteins (PstC and PstA) and a solute-binding protein (PstS).</text>
</comment>
<comment type="subcellular location">
    <subcellularLocation>
        <location evidence="1">Cell inner membrane</location>
        <topology evidence="1">Peripheral membrane protein</topology>
    </subcellularLocation>
</comment>
<comment type="similarity">
    <text evidence="1">Belongs to the ABC transporter superfamily. Phosphate importer (TC 3.A.1.7) family.</text>
</comment>
<reference key="1">
    <citation type="submission" date="2005-08" db="EMBL/GenBank/DDBJ databases">
        <title>Complete sequence of chromosome 1 of Synechococcus elongatus PCC 7942.</title>
        <authorList>
            <consortium name="US DOE Joint Genome Institute"/>
            <person name="Copeland A."/>
            <person name="Lucas S."/>
            <person name="Lapidus A."/>
            <person name="Barry K."/>
            <person name="Detter J.C."/>
            <person name="Glavina T."/>
            <person name="Hammon N."/>
            <person name="Israni S."/>
            <person name="Pitluck S."/>
            <person name="Schmutz J."/>
            <person name="Larimer F."/>
            <person name="Land M."/>
            <person name="Kyrpides N."/>
            <person name="Lykidis A."/>
            <person name="Golden S."/>
            <person name="Richardson P."/>
        </authorList>
    </citation>
    <scope>NUCLEOTIDE SEQUENCE [LARGE SCALE GENOMIC DNA]</scope>
    <source>
        <strain>ATCC 33912 / PCC 7942 / FACHB-805</strain>
    </source>
</reference>
<dbReference type="EC" id="7.3.2.1" evidence="1"/>
<dbReference type="EMBL" id="CP000100">
    <property type="protein sequence ID" value="ABB58471.1"/>
    <property type="molecule type" value="Genomic_DNA"/>
</dbReference>
<dbReference type="RefSeq" id="WP_011378464.1">
    <property type="nucleotide sequence ID" value="NZ_JACJTX010000001.1"/>
</dbReference>
<dbReference type="SMR" id="Q31KE8"/>
<dbReference type="STRING" id="1140.Synpcc7942_2441"/>
<dbReference type="PaxDb" id="1140-Synpcc7942_2441"/>
<dbReference type="GeneID" id="72431331"/>
<dbReference type="KEGG" id="syf:Synpcc7942_2441"/>
<dbReference type="eggNOG" id="COG1117">
    <property type="taxonomic scope" value="Bacteria"/>
</dbReference>
<dbReference type="HOGENOM" id="CLU_000604_1_22_3"/>
<dbReference type="OrthoDB" id="9802185at2"/>
<dbReference type="BioCyc" id="SYNEL:SYNPCC7942_2441-MONOMER"/>
<dbReference type="Proteomes" id="UP000889800">
    <property type="component" value="Chromosome"/>
</dbReference>
<dbReference type="GO" id="GO:0005886">
    <property type="term" value="C:plasma membrane"/>
    <property type="evidence" value="ECO:0007669"/>
    <property type="project" value="UniProtKB-SubCell"/>
</dbReference>
<dbReference type="GO" id="GO:0005524">
    <property type="term" value="F:ATP binding"/>
    <property type="evidence" value="ECO:0007669"/>
    <property type="project" value="UniProtKB-KW"/>
</dbReference>
<dbReference type="GO" id="GO:0016887">
    <property type="term" value="F:ATP hydrolysis activity"/>
    <property type="evidence" value="ECO:0007669"/>
    <property type="project" value="InterPro"/>
</dbReference>
<dbReference type="GO" id="GO:0015415">
    <property type="term" value="F:ATPase-coupled phosphate ion transmembrane transporter activity"/>
    <property type="evidence" value="ECO:0007669"/>
    <property type="project" value="UniProtKB-EC"/>
</dbReference>
<dbReference type="GO" id="GO:0035435">
    <property type="term" value="P:phosphate ion transmembrane transport"/>
    <property type="evidence" value="ECO:0007669"/>
    <property type="project" value="InterPro"/>
</dbReference>
<dbReference type="CDD" id="cd03260">
    <property type="entry name" value="ABC_PstB_phosphate_transporter"/>
    <property type="match status" value="1"/>
</dbReference>
<dbReference type="Gene3D" id="3.40.50.300">
    <property type="entry name" value="P-loop containing nucleotide triphosphate hydrolases"/>
    <property type="match status" value="1"/>
</dbReference>
<dbReference type="InterPro" id="IPR003593">
    <property type="entry name" value="AAA+_ATPase"/>
</dbReference>
<dbReference type="InterPro" id="IPR003439">
    <property type="entry name" value="ABC_transporter-like_ATP-bd"/>
</dbReference>
<dbReference type="InterPro" id="IPR017871">
    <property type="entry name" value="ABC_transporter-like_CS"/>
</dbReference>
<dbReference type="InterPro" id="IPR027417">
    <property type="entry name" value="P-loop_NTPase"/>
</dbReference>
<dbReference type="InterPro" id="IPR005670">
    <property type="entry name" value="PstB-like"/>
</dbReference>
<dbReference type="NCBIfam" id="TIGR00972">
    <property type="entry name" value="3a0107s01c2"/>
    <property type="match status" value="1"/>
</dbReference>
<dbReference type="PANTHER" id="PTHR43423">
    <property type="entry name" value="ABC TRANSPORTER I FAMILY MEMBER 17"/>
    <property type="match status" value="1"/>
</dbReference>
<dbReference type="PANTHER" id="PTHR43423:SF1">
    <property type="entry name" value="ABC TRANSPORTER I FAMILY MEMBER 17"/>
    <property type="match status" value="1"/>
</dbReference>
<dbReference type="Pfam" id="PF00005">
    <property type="entry name" value="ABC_tran"/>
    <property type="match status" value="1"/>
</dbReference>
<dbReference type="SMART" id="SM00382">
    <property type="entry name" value="AAA"/>
    <property type="match status" value="1"/>
</dbReference>
<dbReference type="SUPFAM" id="SSF52540">
    <property type="entry name" value="P-loop containing nucleoside triphosphate hydrolases"/>
    <property type="match status" value="1"/>
</dbReference>
<dbReference type="PROSITE" id="PS00211">
    <property type="entry name" value="ABC_TRANSPORTER_1"/>
    <property type="match status" value="1"/>
</dbReference>
<dbReference type="PROSITE" id="PS50893">
    <property type="entry name" value="ABC_TRANSPORTER_2"/>
    <property type="match status" value="1"/>
</dbReference>
<dbReference type="PROSITE" id="PS51238">
    <property type="entry name" value="PSTB"/>
    <property type="match status" value="1"/>
</dbReference>
<proteinExistence type="inferred from homology"/>
<feature type="chain" id="PRO_0000272563" description="Phosphate import ATP-binding protein PstB">
    <location>
        <begin position="1"/>
        <end position="264"/>
    </location>
</feature>
<feature type="domain" description="ABC transporter" evidence="1">
    <location>
        <begin position="11"/>
        <end position="250"/>
    </location>
</feature>
<feature type="binding site" evidence="1">
    <location>
        <begin position="43"/>
        <end position="50"/>
    </location>
    <ligand>
        <name>ATP</name>
        <dbReference type="ChEBI" id="CHEBI:30616"/>
    </ligand>
</feature>
<protein>
    <recommendedName>
        <fullName evidence="1">Phosphate import ATP-binding protein PstB</fullName>
        <ecNumber evidence="1">7.3.2.1</ecNumber>
    </recommendedName>
    <alternativeName>
        <fullName evidence="1">ABC phosphate transporter</fullName>
    </alternativeName>
    <alternativeName>
        <fullName evidence="1">Phosphate-transporting ATPase</fullName>
    </alternativeName>
</protein>
<accession>Q31KE8</accession>
<evidence type="ECO:0000255" key="1">
    <source>
        <dbReference type="HAMAP-Rule" id="MF_01702"/>
    </source>
</evidence>
<sequence length="264" mass="29254">MSPTAGENILLKAEALSVYYGNSLAVKDVYLEVPKNKIVAFIGPSGCGKSTILRCFNRMNDLINGCRVQGRITFHDQEINDGRVDAVELRSRIGMVFQKPNPFPKSIYENIAYGARINGYQGDMDELVEKSLRQAALWDEVKDKLKDSGLALSGGQQQRLCIARTVAVQPEVILMDEPCSALDPISTLAIEELMQTLKEQYTIIIVTHNMQQASRTSDYTAFFNARATEGGGKMGYLVEFDTTEKIFDSPDQEATADYVSGRFG</sequence>
<name>PSTB_SYNE7</name>